<comment type="function">
    <text evidence="3">May play a role in intracellular calcium sensing and homeostasis. May act as a negative regulator of plasma membrane calcium-transporting ATPases preventing calcium efflux from the cell.</text>
</comment>
<comment type="subunit">
    <text evidence="3">Interacts with STIM1; stimulated by depletion of intracellular calcium. Interacts with ORAI1. Interacts with the plasma membrane calcium-transporting ATPases ATP2B1 and ATP2B4. Interacts with ATP1A1, ATP2A2, KPNB1 and XPO1.</text>
</comment>
<comment type="interaction">
    <interactant intactId="EBI-13311257">
        <id>Q2M3R5</id>
    </interactant>
    <interactant intactId="EBI-3915253">
        <id>Q15125</id>
        <label>EBP</label>
    </interactant>
    <organismsDiffer>false</organismsDiffer>
    <experiments>3</experiments>
</comment>
<comment type="interaction">
    <interactant intactId="EBI-13311257">
        <id>Q2M3R5</id>
    </interactant>
    <interactant intactId="EBI-18938272">
        <id>Q96KR6</id>
        <label>FAM210B</label>
    </interactant>
    <organismsDiffer>false</organismsDiffer>
    <experiments>3</experiments>
</comment>
<comment type="interaction">
    <interactant intactId="EBI-13311257">
        <id>Q2M3R5</id>
    </interactant>
    <interactant intactId="EBI-17595455">
        <id>P54219-3</id>
        <label>SLC18A1</label>
    </interactant>
    <organismsDiffer>false</organismsDiffer>
    <experiments>3</experiments>
</comment>
<comment type="interaction">
    <interactant intactId="EBI-13311257">
        <id>Q2M3R5</id>
    </interactant>
    <interactant intactId="EBI-8638294">
        <id>Q9NUH8</id>
        <label>TMEM14B</label>
    </interactant>
    <organismsDiffer>false</organismsDiffer>
    <experiments>3</experiments>
</comment>
<comment type="interaction">
    <interactant intactId="EBI-13311257">
        <id>Q2M3R5</id>
    </interactant>
    <interactant intactId="EBI-10982110">
        <id>Q96Q45-2</id>
        <label>TMEM237</label>
    </interactant>
    <organismsDiffer>false</organismsDiffer>
    <experiments>3</experiments>
</comment>
<comment type="interaction">
    <interactant intactId="EBI-13311257">
        <id>Q2M3R5</id>
    </interactant>
    <interactant intactId="EBI-7850136">
        <id>Q9Y548</id>
        <label>YIPF1</label>
    </interactant>
    <organismsDiffer>false</organismsDiffer>
    <experiments>3</experiments>
</comment>
<comment type="subcellular location">
    <subcellularLocation>
        <location evidence="3">Cell membrane</location>
        <topology evidence="3">Multi-pass membrane protein</topology>
    </subcellularLocation>
    <subcellularLocation>
        <location evidence="3">Endoplasmic reticulum membrane</location>
        <topology evidence="3">Multi-pass membrane protein</topology>
    </subcellularLocation>
    <text>Translocates from the endoplasmic reticulum to the cell membrane in response to a depletion of intracellular calcium and is detected at punctae corresponding to junctions between the endoplasmic reticulum and the cell membrane.</text>
</comment>
<comment type="alternative products">
    <event type="alternative splicing"/>
    <isoform>
        <id>Q2M3R5-1</id>
        <name>1</name>
        <sequence type="displayed"/>
    </isoform>
    <isoform>
        <id>Q2M3R5-2</id>
        <name>2</name>
        <sequence type="described" ref="VSP_019566"/>
    </isoform>
</comment>
<comment type="tissue specificity">
    <text evidence="3">Ubiquitously expressed.</text>
</comment>
<comment type="similarity">
    <text evidence="5">Belongs to the TMEM20 family.</text>
</comment>
<evidence type="ECO:0000255" key="1"/>
<evidence type="ECO:0000256" key="2">
    <source>
        <dbReference type="SAM" id="MobiDB-lite"/>
    </source>
</evidence>
<evidence type="ECO:0000269" key="3">
    <source>
    </source>
</evidence>
<evidence type="ECO:0000303" key="4">
    <source>
    </source>
</evidence>
<evidence type="ECO:0000305" key="5"/>
<keyword id="KW-0025">Alternative splicing</keyword>
<keyword id="KW-1003">Cell membrane</keyword>
<keyword id="KW-0256">Endoplasmic reticulum</keyword>
<keyword id="KW-0472">Membrane</keyword>
<keyword id="KW-1267">Proteomics identification</keyword>
<keyword id="KW-1185">Reference proteome</keyword>
<keyword id="KW-0677">Repeat</keyword>
<keyword id="KW-0812">Transmembrane</keyword>
<keyword id="KW-1133">Transmembrane helix</keyword>
<proteinExistence type="evidence at protein level"/>
<feature type="chain" id="PRO_0000244463" description="Solute carrier family 35 member G1">
    <location>
        <begin position="1"/>
        <end position="365"/>
    </location>
</feature>
<feature type="transmembrane region" description="Helical" evidence="1">
    <location>
        <begin position="69"/>
        <end position="89"/>
    </location>
</feature>
<feature type="transmembrane region" description="Helical" evidence="1">
    <location>
        <begin position="97"/>
        <end position="117"/>
    </location>
</feature>
<feature type="transmembrane region" description="Helical" evidence="1">
    <location>
        <begin position="131"/>
        <end position="151"/>
    </location>
</feature>
<feature type="transmembrane region" description="Helical" evidence="1">
    <location>
        <begin position="156"/>
        <end position="176"/>
    </location>
</feature>
<feature type="transmembrane region" description="Helical" evidence="1">
    <location>
        <begin position="187"/>
        <end position="207"/>
    </location>
</feature>
<feature type="transmembrane region" description="Helical" evidence="1">
    <location>
        <begin position="222"/>
        <end position="242"/>
    </location>
</feature>
<feature type="transmembrane region" description="Helical" evidence="1">
    <location>
        <begin position="252"/>
        <end position="272"/>
    </location>
</feature>
<feature type="transmembrane region" description="Helical" evidence="1">
    <location>
        <begin position="286"/>
        <end position="306"/>
    </location>
</feature>
<feature type="transmembrane region" description="Helical" evidence="1">
    <location>
        <begin position="311"/>
        <end position="333"/>
    </location>
</feature>
<feature type="transmembrane region" description="Helical" evidence="1">
    <location>
        <begin position="338"/>
        <end position="357"/>
    </location>
</feature>
<feature type="domain" description="EamA 1">
    <location>
        <begin position="80"/>
        <end position="202"/>
    </location>
</feature>
<feature type="domain" description="EamA 2">
    <location>
        <begin position="233"/>
        <end position="357"/>
    </location>
</feature>
<feature type="region of interest" description="Disordered" evidence="2">
    <location>
        <begin position="1"/>
        <end position="33"/>
    </location>
</feature>
<feature type="compositionally biased region" description="Low complexity" evidence="2">
    <location>
        <begin position="23"/>
        <end position="33"/>
    </location>
</feature>
<feature type="splice variant" id="VSP_019566" description="In isoform 2." evidence="4">
    <location>
        <position position="60"/>
    </location>
</feature>
<sequence>MRPQDSTGVAELQEPGLPLTDDAPPGATEEPAAAEAAGAPDRGRCWLCLSSPCCSRTEPEAKKKAPCPGLGLFYTLLSAFLFSVGSLFVKKVQDVHAVEISAFRCVFQMLVVIPCLIYRKTGFIGPKGQRIFLILRGVLGSTAMMLIYYAYQTMSLADATVITFSSPVFTSIFAWICLKEKYSPWDALFTVFTITGVILIVRPPFLFGSDTSGMEESYSGHLKGTFAAIGSAVFAASTLVILRKMGKSVDYFLSIWYYVVLGLVESVIILSVLGEWSLPYCGLDRLFLIFIGLFGLGGQIFITKALQIEKAGPVAIMKTMDVVFAFIFQIIFFNNVPTWWTVGGALCVVASNVGAAIRKWYQSSK</sequence>
<protein>
    <recommendedName>
        <fullName>Solute carrier family 35 member G1</fullName>
    </recommendedName>
    <alternativeName>
        <fullName>Partner of STIM1</fullName>
    </alternativeName>
    <alternativeName>
        <fullName>Transmembrane protein 20</fullName>
    </alternativeName>
</protein>
<gene>
    <name type="primary">SLC35G1</name>
    <name type="synonym">C10orf60</name>
    <name type="synonym">POST</name>
    <name type="synonym">TMEM20</name>
</gene>
<accession>Q2M3R5</accession>
<accession>Q86YG5</accession>
<accession>Q8NBA5</accession>
<name>S35G1_HUMAN</name>
<organism>
    <name type="scientific">Homo sapiens</name>
    <name type="common">Human</name>
    <dbReference type="NCBI Taxonomy" id="9606"/>
    <lineage>
        <taxon>Eukaryota</taxon>
        <taxon>Metazoa</taxon>
        <taxon>Chordata</taxon>
        <taxon>Craniata</taxon>
        <taxon>Vertebrata</taxon>
        <taxon>Euteleostomi</taxon>
        <taxon>Mammalia</taxon>
        <taxon>Eutheria</taxon>
        <taxon>Euarchontoglires</taxon>
        <taxon>Primates</taxon>
        <taxon>Haplorrhini</taxon>
        <taxon>Catarrhini</taxon>
        <taxon>Hominidae</taxon>
        <taxon>Homo</taxon>
    </lineage>
</organism>
<reference key="1">
    <citation type="journal article" date="2004" name="Nat. Genet.">
        <title>Complete sequencing and characterization of 21,243 full-length human cDNAs.</title>
        <authorList>
            <person name="Ota T."/>
            <person name="Suzuki Y."/>
            <person name="Nishikawa T."/>
            <person name="Otsuki T."/>
            <person name="Sugiyama T."/>
            <person name="Irie R."/>
            <person name="Wakamatsu A."/>
            <person name="Hayashi K."/>
            <person name="Sato H."/>
            <person name="Nagai K."/>
            <person name="Kimura K."/>
            <person name="Makita H."/>
            <person name="Sekine M."/>
            <person name="Obayashi M."/>
            <person name="Nishi T."/>
            <person name="Shibahara T."/>
            <person name="Tanaka T."/>
            <person name="Ishii S."/>
            <person name="Yamamoto J."/>
            <person name="Saito K."/>
            <person name="Kawai Y."/>
            <person name="Isono Y."/>
            <person name="Nakamura Y."/>
            <person name="Nagahari K."/>
            <person name="Murakami K."/>
            <person name="Yasuda T."/>
            <person name="Iwayanagi T."/>
            <person name="Wagatsuma M."/>
            <person name="Shiratori A."/>
            <person name="Sudo H."/>
            <person name="Hosoiri T."/>
            <person name="Kaku Y."/>
            <person name="Kodaira H."/>
            <person name="Kondo H."/>
            <person name="Sugawara M."/>
            <person name="Takahashi M."/>
            <person name="Kanda K."/>
            <person name="Yokoi T."/>
            <person name="Furuya T."/>
            <person name="Kikkawa E."/>
            <person name="Omura Y."/>
            <person name="Abe K."/>
            <person name="Kamihara K."/>
            <person name="Katsuta N."/>
            <person name="Sato K."/>
            <person name="Tanikawa M."/>
            <person name="Yamazaki M."/>
            <person name="Ninomiya K."/>
            <person name="Ishibashi T."/>
            <person name="Yamashita H."/>
            <person name="Murakawa K."/>
            <person name="Fujimori K."/>
            <person name="Tanai H."/>
            <person name="Kimata M."/>
            <person name="Watanabe M."/>
            <person name="Hiraoka S."/>
            <person name="Chiba Y."/>
            <person name="Ishida S."/>
            <person name="Ono Y."/>
            <person name="Takiguchi S."/>
            <person name="Watanabe S."/>
            <person name="Yosida M."/>
            <person name="Hotuta T."/>
            <person name="Kusano J."/>
            <person name="Kanehori K."/>
            <person name="Takahashi-Fujii A."/>
            <person name="Hara H."/>
            <person name="Tanase T.-O."/>
            <person name="Nomura Y."/>
            <person name="Togiya S."/>
            <person name="Komai F."/>
            <person name="Hara R."/>
            <person name="Takeuchi K."/>
            <person name="Arita M."/>
            <person name="Imose N."/>
            <person name="Musashino K."/>
            <person name="Yuuki H."/>
            <person name="Oshima A."/>
            <person name="Sasaki N."/>
            <person name="Aotsuka S."/>
            <person name="Yoshikawa Y."/>
            <person name="Matsunawa H."/>
            <person name="Ichihara T."/>
            <person name="Shiohata N."/>
            <person name="Sano S."/>
            <person name="Moriya S."/>
            <person name="Momiyama H."/>
            <person name="Satoh N."/>
            <person name="Takami S."/>
            <person name="Terashima Y."/>
            <person name="Suzuki O."/>
            <person name="Nakagawa S."/>
            <person name="Senoh A."/>
            <person name="Mizoguchi H."/>
            <person name="Goto Y."/>
            <person name="Shimizu F."/>
            <person name="Wakebe H."/>
            <person name="Hishigaki H."/>
            <person name="Watanabe T."/>
            <person name="Sugiyama A."/>
            <person name="Takemoto M."/>
            <person name="Kawakami B."/>
            <person name="Yamazaki M."/>
            <person name="Watanabe K."/>
            <person name="Kumagai A."/>
            <person name="Itakura S."/>
            <person name="Fukuzumi Y."/>
            <person name="Fujimori Y."/>
            <person name="Komiyama M."/>
            <person name="Tashiro H."/>
            <person name="Tanigami A."/>
            <person name="Fujiwara T."/>
            <person name="Ono T."/>
            <person name="Yamada K."/>
            <person name="Fujii Y."/>
            <person name="Ozaki K."/>
            <person name="Hirao M."/>
            <person name="Ohmori Y."/>
            <person name="Kawabata A."/>
            <person name="Hikiji T."/>
            <person name="Kobatake N."/>
            <person name="Inagaki H."/>
            <person name="Ikema Y."/>
            <person name="Okamoto S."/>
            <person name="Okitani R."/>
            <person name="Kawakami T."/>
            <person name="Noguchi S."/>
            <person name="Itoh T."/>
            <person name="Shigeta K."/>
            <person name="Senba T."/>
            <person name="Matsumura K."/>
            <person name="Nakajima Y."/>
            <person name="Mizuno T."/>
            <person name="Morinaga M."/>
            <person name="Sasaki M."/>
            <person name="Togashi T."/>
            <person name="Oyama M."/>
            <person name="Hata H."/>
            <person name="Watanabe M."/>
            <person name="Komatsu T."/>
            <person name="Mizushima-Sugano J."/>
            <person name="Satoh T."/>
            <person name="Shirai Y."/>
            <person name="Takahashi Y."/>
            <person name="Nakagawa K."/>
            <person name="Okumura K."/>
            <person name="Nagase T."/>
            <person name="Nomura N."/>
            <person name="Kikuchi H."/>
            <person name="Masuho Y."/>
            <person name="Yamashita R."/>
            <person name="Nakai K."/>
            <person name="Yada T."/>
            <person name="Nakamura Y."/>
            <person name="Ohara O."/>
            <person name="Isogai T."/>
            <person name="Sugano S."/>
        </authorList>
    </citation>
    <scope>NUCLEOTIDE SEQUENCE [LARGE SCALE MRNA] (ISOFORM 2)</scope>
</reference>
<reference key="2">
    <citation type="journal article" date="2004" name="Nature">
        <title>The DNA sequence and comparative analysis of human chromosome 10.</title>
        <authorList>
            <person name="Deloukas P."/>
            <person name="Earthrowl M.E."/>
            <person name="Grafham D.V."/>
            <person name="Rubenfield M."/>
            <person name="French L."/>
            <person name="Steward C.A."/>
            <person name="Sims S.K."/>
            <person name="Jones M.C."/>
            <person name="Searle S."/>
            <person name="Scott C."/>
            <person name="Howe K."/>
            <person name="Hunt S.E."/>
            <person name="Andrews T.D."/>
            <person name="Gilbert J.G.R."/>
            <person name="Swarbreck D."/>
            <person name="Ashurst J.L."/>
            <person name="Taylor A."/>
            <person name="Battles J."/>
            <person name="Bird C.P."/>
            <person name="Ainscough R."/>
            <person name="Almeida J.P."/>
            <person name="Ashwell R.I.S."/>
            <person name="Ambrose K.D."/>
            <person name="Babbage A.K."/>
            <person name="Bagguley C.L."/>
            <person name="Bailey J."/>
            <person name="Banerjee R."/>
            <person name="Bates K."/>
            <person name="Beasley H."/>
            <person name="Bray-Allen S."/>
            <person name="Brown A.J."/>
            <person name="Brown J.Y."/>
            <person name="Burford D.C."/>
            <person name="Burrill W."/>
            <person name="Burton J."/>
            <person name="Cahill P."/>
            <person name="Camire D."/>
            <person name="Carter N.P."/>
            <person name="Chapman J.C."/>
            <person name="Clark S.Y."/>
            <person name="Clarke G."/>
            <person name="Clee C.M."/>
            <person name="Clegg S."/>
            <person name="Corby N."/>
            <person name="Coulson A."/>
            <person name="Dhami P."/>
            <person name="Dutta I."/>
            <person name="Dunn M."/>
            <person name="Faulkner L."/>
            <person name="Frankish A."/>
            <person name="Frankland J.A."/>
            <person name="Garner P."/>
            <person name="Garnett J."/>
            <person name="Gribble S."/>
            <person name="Griffiths C."/>
            <person name="Grocock R."/>
            <person name="Gustafson E."/>
            <person name="Hammond S."/>
            <person name="Harley J.L."/>
            <person name="Hart E."/>
            <person name="Heath P.D."/>
            <person name="Ho T.P."/>
            <person name="Hopkins B."/>
            <person name="Horne J."/>
            <person name="Howden P.J."/>
            <person name="Huckle E."/>
            <person name="Hynds C."/>
            <person name="Johnson C."/>
            <person name="Johnson D."/>
            <person name="Kana A."/>
            <person name="Kay M."/>
            <person name="Kimberley A.M."/>
            <person name="Kershaw J.K."/>
            <person name="Kokkinaki M."/>
            <person name="Laird G.K."/>
            <person name="Lawlor S."/>
            <person name="Lee H.M."/>
            <person name="Leongamornlert D.A."/>
            <person name="Laird G."/>
            <person name="Lloyd C."/>
            <person name="Lloyd D.M."/>
            <person name="Loveland J."/>
            <person name="Lovell J."/>
            <person name="McLaren S."/>
            <person name="McLay K.E."/>
            <person name="McMurray A."/>
            <person name="Mashreghi-Mohammadi M."/>
            <person name="Matthews L."/>
            <person name="Milne S."/>
            <person name="Nickerson T."/>
            <person name="Nguyen M."/>
            <person name="Overton-Larty E."/>
            <person name="Palmer S.A."/>
            <person name="Pearce A.V."/>
            <person name="Peck A.I."/>
            <person name="Pelan S."/>
            <person name="Phillimore B."/>
            <person name="Porter K."/>
            <person name="Rice C.M."/>
            <person name="Rogosin A."/>
            <person name="Ross M.T."/>
            <person name="Sarafidou T."/>
            <person name="Sehra H.K."/>
            <person name="Shownkeen R."/>
            <person name="Skuce C.D."/>
            <person name="Smith M."/>
            <person name="Standring L."/>
            <person name="Sycamore N."/>
            <person name="Tester J."/>
            <person name="Thorpe A."/>
            <person name="Torcasso W."/>
            <person name="Tracey A."/>
            <person name="Tromans A."/>
            <person name="Tsolas J."/>
            <person name="Wall M."/>
            <person name="Walsh J."/>
            <person name="Wang H."/>
            <person name="Weinstock K."/>
            <person name="West A.P."/>
            <person name="Willey D.L."/>
            <person name="Whitehead S.L."/>
            <person name="Wilming L."/>
            <person name="Wray P.W."/>
            <person name="Young L."/>
            <person name="Chen Y."/>
            <person name="Lovering R.C."/>
            <person name="Moschonas N.K."/>
            <person name="Siebert R."/>
            <person name="Fechtel K."/>
            <person name="Bentley D."/>
            <person name="Durbin R.M."/>
            <person name="Hubbard T."/>
            <person name="Doucette-Stamm L."/>
            <person name="Beck S."/>
            <person name="Smith D.R."/>
            <person name="Rogers J."/>
        </authorList>
    </citation>
    <scope>NUCLEOTIDE SEQUENCE [LARGE SCALE GENOMIC DNA]</scope>
</reference>
<reference key="3">
    <citation type="journal article" date="2004" name="Genome Res.">
        <title>The status, quality, and expansion of the NIH full-length cDNA project: the Mammalian Gene Collection (MGC).</title>
        <authorList>
            <consortium name="The MGC Project Team"/>
        </authorList>
    </citation>
    <scope>NUCLEOTIDE SEQUENCE [LARGE SCALE MRNA] (ISOFORM 1)</scope>
    <source>
        <tissue>Brain</tissue>
        <tissue>Urinary bladder</tissue>
    </source>
</reference>
<reference key="4">
    <citation type="journal article" date="2011" name="Proc. Natl. Acad. Sci. U.S.A.">
        <title>POST, partner of stromal interaction molecule 1 (STIM1), targets STIM1 to multiple transporters.</title>
        <authorList>
            <person name="Krapivinsky G."/>
            <person name="Krapivinsky L."/>
            <person name="Stotz S.C."/>
            <person name="Manasian Y."/>
            <person name="Clapham D.E."/>
        </authorList>
    </citation>
    <scope>FUNCTION</scope>
    <scope>INTERACTION WITH ATP1A1; ATP2A2; ATP2B1; ATP2B4; KPNB1; ORAI1; STIM1 AND XPO1</scope>
    <scope>SUBCELLULAR LOCATION</scope>
    <scope>TISSUE SPECIFICITY</scope>
</reference>
<dbReference type="EMBL" id="AK091309">
    <property type="protein sequence ID" value="BAC03633.1"/>
    <property type="molecule type" value="mRNA"/>
</dbReference>
<dbReference type="EMBL" id="AL138923">
    <property type="status" value="NOT_ANNOTATED_CDS"/>
    <property type="molecule type" value="Genomic_DNA"/>
</dbReference>
<dbReference type="EMBL" id="BC041432">
    <property type="protein sequence ID" value="AAH41432.1"/>
    <property type="molecule type" value="mRNA"/>
</dbReference>
<dbReference type="EMBL" id="BC104814">
    <property type="protein sequence ID" value="AAI04815.1"/>
    <property type="molecule type" value="mRNA"/>
</dbReference>
<dbReference type="CCDS" id="CCDS44459.1">
    <molecule id="Q2M3R5-1"/>
</dbReference>
<dbReference type="CCDS" id="CCDS7432.1">
    <molecule id="Q2M3R5-2"/>
</dbReference>
<dbReference type="RefSeq" id="NP_001128130.1">
    <molecule id="Q2M3R5-1"/>
    <property type="nucleotide sequence ID" value="NM_001134658.3"/>
</dbReference>
<dbReference type="RefSeq" id="NP_694958.1">
    <molecule id="Q2M3R5-2"/>
    <property type="nucleotide sequence ID" value="NM_153226.4"/>
</dbReference>
<dbReference type="SMR" id="Q2M3R5"/>
<dbReference type="BioGRID" id="127741">
    <property type="interactions" value="36"/>
</dbReference>
<dbReference type="FunCoup" id="Q2M3R5">
    <property type="interactions" value="644"/>
</dbReference>
<dbReference type="IntAct" id="Q2M3R5">
    <property type="interactions" value="29"/>
</dbReference>
<dbReference type="STRING" id="9606.ENSP00000400932"/>
<dbReference type="TCDB" id="2.A.7.28.8">
    <property type="family name" value="the drug/metabolite transporter (dmt) superfamily"/>
</dbReference>
<dbReference type="GlyGen" id="Q2M3R5">
    <property type="glycosylation" value="1 site"/>
</dbReference>
<dbReference type="iPTMnet" id="Q2M3R5"/>
<dbReference type="PhosphoSitePlus" id="Q2M3R5"/>
<dbReference type="BioMuta" id="SLC35G1"/>
<dbReference type="DMDM" id="109895215"/>
<dbReference type="MassIVE" id="Q2M3R5"/>
<dbReference type="PaxDb" id="9606-ENSP00000400932"/>
<dbReference type="PeptideAtlas" id="Q2M3R5"/>
<dbReference type="Antibodypedia" id="82282">
    <property type="antibodies" value="4 antibodies from 2 providers"/>
</dbReference>
<dbReference type="DNASU" id="159371"/>
<dbReference type="Ensembl" id="ENST00000371408.7">
    <molecule id="Q2M3R5-2"/>
    <property type="protein sequence ID" value="ENSP00000360462.3"/>
    <property type="gene ID" value="ENSG00000176273.15"/>
</dbReference>
<dbReference type="Ensembl" id="ENST00000427197.2">
    <molecule id="Q2M3R5-1"/>
    <property type="protein sequence ID" value="ENSP00000400932.1"/>
    <property type="gene ID" value="ENSG00000176273.15"/>
</dbReference>
<dbReference type="GeneID" id="159371"/>
<dbReference type="KEGG" id="hsa:159371"/>
<dbReference type="MANE-Select" id="ENST00000427197.2">
    <property type="protein sequence ID" value="ENSP00000400932.1"/>
    <property type="RefSeq nucleotide sequence ID" value="NM_001134658.3"/>
    <property type="RefSeq protein sequence ID" value="NP_001128130.1"/>
</dbReference>
<dbReference type="UCSC" id="uc001kjf.3">
    <molecule id="Q2M3R5-1"/>
    <property type="organism name" value="human"/>
</dbReference>
<dbReference type="AGR" id="HGNC:26607"/>
<dbReference type="CTD" id="159371"/>
<dbReference type="DisGeNET" id="159371"/>
<dbReference type="GeneCards" id="SLC35G1"/>
<dbReference type="HGNC" id="HGNC:26607">
    <property type="gene designation" value="SLC35G1"/>
</dbReference>
<dbReference type="HPA" id="ENSG00000176273">
    <property type="expression patterns" value="Tissue enriched (intestine)"/>
</dbReference>
<dbReference type="MalaCards" id="SLC35G1"/>
<dbReference type="MIM" id="617167">
    <property type="type" value="gene"/>
</dbReference>
<dbReference type="neXtProt" id="NX_Q2M3R5"/>
<dbReference type="OpenTargets" id="ENSG00000176273"/>
<dbReference type="PharmGKB" id="PA134933626"/>
<dbReference type="VEuPathDB" id="HostDB:ENSG00000176273"/>
<dbReference type="eggNOG" id="KOG4510">
    <property type="taxonomic scope" value="Eukaryota"/>
</dbReference>
<dbReference type="GeneTree" id="ENSGT00940000153249"/>
<dbReference type="HOGENOM" id="CLU_032828_1_2_1"/>
<dbReference type="InParanoid" id="Q2M3R5"/>
<dbReference type="OMA" id="KYSLWDA"/>
<dbReference type="OrthoDB" id="306876at2759"/>
<dbReference type="PAN-GO" id="Q2M3R5">
    <property type="GO annotations" value="5 GO annotations based on evolutionary models"/>
</dbReference>
<dbReference type="PhylomeDB" id="Q2M3R5"/>
<dbReference type="TreeFam" id="TF323956"/>
<dbReference type="PathwayCommons" id="Q2M3R5"/>
<dbReference type="SignaLink" id="Q2M3R5"/>
<dbReference type="BioGRID-ORCS" id="159371">
    <property type="hits" value="11 hits in 1151 CRISPR screens"/>
</dbReference>
<dbReference type="GenomeRNAi" id="159371"/>
<dbReference type="Pharos" id="Q2M3R5">
    <property type="development level" value="Tbio"/>
</dbReference>
<dbReference type="PRO" id="PR:Q2M3R5"/>
<dbReference type="Proteomes" id="UP000005640">
    <property type="component" value="Chromosome 10"/>
</dbReference>
<dbReference type="RNAct" id="Q2M3R5">
    <property type="molecule type" value="protein"/>
</dbReference>
<dbReference type="Bgee" id="ENSG00000176273">
    <property type="expression patterns" value="Expressed in secondary oocyte and 124 other cell types or tissues"/>
</dbReference>
<dbReference type="ExpressionAtlas" id="Q2M3R5">
    <property type="expression patterns" value="baseline and differential"/>
</dbReference>
<dbReference type="GO" id="GO:0005789">
    <property type="term" value="C:endoplasmic reticulum membrane"/>
    <property type="evidence" value="ECO:0000314"/>
    <property type="project" value="UniProtKB"/>
</dbReference>
<dbReference type="GO" id="GO:0005886">
    <property type="term" value="C:plasma membrane"/>
    <property type="evidence" value="ECO:0000314"/>
    <property type="project" value="UniProtKB"/>
</dbReference>
<dbReference type="GO" id="GO:1990034">
    <property type="term" value="P:calcium ion export across plasma membrane"/>
    <property type="evidence" value="ECO:0000315"/>
    <property type="project" value="UniProtKB"/>
</dbReference>
<dbReference type="GO" id="GO:0051480">
    <property type="term" value="P:regulation of cytosolic calcium ion concentration"/>
    <property type="evidence" value="ECO:0000315"/>
    <property type="project" value="UniProtKB"/>
</dbReference>
<dbReference type="FunFam" id="1.10.3730.20:FF:000026">
    <property type="entry name" value="Solute carrier family 35, member G1"/>
    <property type="match status" value="1"/>
</dbReference>
<dbReference type="InterPro" id="IPR000620">
    <property type="entry name" value="EamA_dom"/>
</dbReference>
<dbReference type="PANTHER" id="PTHR22911">
    <property type="entry name" value="ACYL-MALONYL CONDENSING ENZYME-RELATED"/>
    <property type="match status" value="1"/>
</dbReference>
<dbReference type="PANTHER" id="PTHR22911:SF6">
    <property type="entry name" value="SOLUTE CARRIER FAMILY 35 MEMBER G1"/>
    <property type="match status" value="1"/>
</dbReference>
<dbReference type="Pfam" id="PF00892">
    <property type="entry name" value="EamA"/>
    <property type="match status" value="2"/>
</dbReference>
<dbReference type="SUPFAM" id="SSF103481">
    <property type="entry name" value="Multidrug resistance efflux transporter EmrE"/>
    <property type="match status" value="2"/>
</dbReference>